<proteinExistence type="inferred from homology"/>
<organism>
    <name type="scientific">Actinobacillus pleuropneumoniae serotype 3 (strain JL03)</name>
    <dbReference type="NCBI Taxonomy" id="434271"/>
    <lineage>
        <taxon>Bacteria</taxon>
        <taxon>Pseudomonadati</taxon>
        <taxon>Pseudomonadota</taxon>
        <taxon>Gammaproteobacteria</taxon>
        <taxon>Pasteurellales</taxon>
        <taxon>Pasteurellaceae</taxon>
        <taxon>Actinobacillus</taxon>
    </lineage>
</organism>
<sequence>MAKEDCIEMQGTILETLPNTMFRVELENGHVVTAHISGKMRKNYIRILTGDKVTVEMTPYDLSKARIIFRAR</sequence>
<dbReference type="EMBL" id="CP000687">
    <property type="protein sequence ID" value="ABY69795.1"/>
    <property type="molecule type" value="Genomic_DNA"/>
</dbReference>
<dbReference type="RefSeq" id="WP_005598198.1">
    <property type="nucleotide sequence ID" value="NC_010278.1"/>
</dbReference>
<dbReference type="SMR" id="B0BQG0"/>
<dbReference type="GeneID" id="92744256"/>
<dbReference type="KEGG" id="apj:APJL_1239"/>
<dbReference type="HOGENOM" id="CLU_151267_1_0_6"/>
<dbReference type="Proteomes" id="UP000008547">
    <property type="component" value="Chromosome"/>
</dbReference>
<dbReference type="GO" id="GO:0005829">
    <property type="term" value="C:cytosol"/>
    <property type="evidence" value="ECO:0007669"/>
    <property type="project" value="TreeGrafter"/>
</dbReference>
<dbReference type="GO" id="GO:0043022">
    <property type="term" value="F:ribosome binding"/>
    <property type="evidence" value="ECO:0007669"/>
    <property type="project" value="UniProtKB-UniRule"/>
</dbReference>
<dbReference type="GO" id="GO:0019843">
    <property type="term" value="F:rRNA binding"/>
    <property type="evidence" value="ECO:0007669"/>
    <property type="project" value="UniProtKB-UniRule"/>
</dbReference>
<dbReference type="GO" id="GO:0003743">
    <property type="term" value="F:translation initiation factor activity"/>
    <property type="evidence" value="ECO:0007669"/>
    <property type="project" value="UniProtKB-UniRule"/>
</dbReference>
<dbReference type="CDD" id="cd04451">
    <property type="entry name" value="S1_IF1"/>
    <property type="match status" value="1"/>
</dbReference>
<dbReference type="FunFam" id="2.40.50.140:FF:000002">
    <property type="entry name" value="Translation initiation factor IF-1"/>
    <property type="match status" value="1"/>
</dbReference>
<dbReference type="Gene3D" id="2.40.50.140">
    <property type="entry name" value="Nucleic acid-binding proteins"/>
    <property type="match status" value="1"/>
</dbReference>
<dbReference type="HAMAP" id="MF_00075">
    <property type="entry name" value="IF_1"/>
    <property type="match status" value="1"/>
</dbReference>
<dbReference type="InterPro" id="IPR012340">
    <property type="entry name" value="NA-bd_OB-fold"/>
</dbReference>
<dbReference type="InterPro" id="IPR006196">
    <property type="entry name" value="RNA-binding_domain_S1_IF1"/>
</dbReference>
<dbReference type="InterPro" id="IPR003029">
    <property type="entry name" value="S1_domain"/>
</dbReference>
<dbReference type="InterPro" id="IPR004368">
    <property type="entry name" value="TIF_IF1"/>
</dbReference>
<dbReference type="NCBIfam" id="TIGR00008">
    <property type="entry name" value="infA"/>
    <property type="match status" value="1"/>
</dbReference>
<dbReference type="PANTHER" id="PTHR33370">
    <property type="entry name" value="TRANSLATION INITIATION FACTOR IF-1, CHLOROPLASTIC"/>
    <property type="match status" value="1"/>
</dbReference>
<dbReference type="PANTHER" id="PTHR33370:SF1">
    <property type="entry name" value="TRANSLATION INITIATION FACTOR IF-1, CHLOROPLASTIC"/>
    <property type="match status" value="1"/>
</dbReference>
<dbReference type="Pfam" id="PF01176">
    <property type="entry name" value="eIF-1a"/>
    <property type="match status" value="1"/>
</dbReference>
<dbReference type="SMART" id="SM00316">
    <property type="entry name" value="S1"/>
    <property type="match status" value="1"/>
</dbReference>
<dbReference type="SUPFAM" id="SSF50249">
    <property type="entry name" value="Nucleic acid-binding proteins"/>
    <property type="match status" value="1"/>
</dbReference>
<dbReference type="PROSITE" id="PS50832">
    <property type="entry name" value="S1_IF1_TYPE"/>
    <property type="match status" value="1"/>
</dbReference>
<evidence type="ECO:0000255" key="1">
    <source>
        <dbReference type="HAMAP-Rule" id="MF_00075"/>
    </source>
</evidence>
<name>IF1_ACTPJ</name>
<protein>
    <recommendedName>
        <fullName evidence="1">Translation initiation factor IF-1</fullName>
    </recommendedName>
</protein>
<keyword id="KW-0963">Cytoplasm</keyword>
<keyword id="KW-0396">Initiation factor</keyword>
<keyword id="KW-0648">Protein biosynthesis</keyword>
<keyword id="KW-0694">RNA-binding</keyword>
<keyword id="KW-0699">rRNA-binding</keyword>
<feature type="chain" id="PRO_0000338751" description="Translation initiation factor IF-1">
    <location>
        <begin position="1"/>
        <end position="72"/>
    </location>
</feature>
<feature type="domain" description="S1-like" evidence="1">
    <location>
        <begin position="1"/>
        <end position="72"/>
    </location>
</feature>
<accession>B0BQG0</accession>
<comment type="function">
    <text evidence="1">One of the essential components for the initiation of protein synthesis. Stabilizes the binding of IF-2 and IF-3 on the 30S subunit to which N-formylmethionyl-tRNA(fMet) subsequently binds. Helps modulate mRNA selection, yielding the 30S pre-initiation complex (PIC). Upon addition of the 50S ribosomal subunit IF-1, IF-2 and IF-3 are released leaving the mature 70S translation initiation complex.</text>
</comment>
<comment type="subunit">
    <text evidence="1">Component of the 30S ribosomal translation pre-initiation complex which assembles on the 30S ribosome in the order IF-2 and IF-3, IF-1 and N-formylmethionyl-tRNA(fMet); mRNA recruitment can occur at any time during PIC assembly.</text>
</comment>
<comment type="subcellular location">
    <subcellularLocation>
        <location evidence="1">Cytoplasm</location>
    </subcellularLocation>
</comment>
<comment type="similarity">
    <text evidence="1">Belongs to the IF-1 family.</text>
</comment>
<gene>
    <name evidence="1" type="primary">infA</name>
    <name type="ordered locus">APJL_1239</name>
</gene>
<reference key="1">
    <citation type="journal article" date="2008" name="PLoS ONE">
        <title>Genome biology of Actinobacillus pleuropneumoniae JL03, an isolate of serotype 3 prevalent in China.</title>
        <authorList>
            <person name="Xu Z."/>
            <person name="Zhou Y."/>
            <person name="Li L."/>
            <person name="Zhou R."/>
            <person name="Xiao S."/>
            <person name="Wan Y."/>
            <person name="Zhang S."/>
            <person name="Wang K."/>
            <person name="Li W."/>
            <person name="Li L."/>
            <person name="Jin H."/>
            <person name="Kang M."/>
            <person name="Dalai B."/>
            <person name="Li T."/>
            <person name="Liu L."/>
            <person name="Cheng Y."/>
            <person name="Zhang L."/>
            <person name="Xu T."/>
            <person name="Zheng H."/>
            <person name="Pu S."/>
            <person name="Wang B."/>
            <person name="Gu W."/>
            <person name="Zhang X.L."/>
            <person name="Zhu G.-F."/>
            <person name="Wang S."/>
            <person name="Zhao G.-P."/>
            <person name="Chen H."/>
        </authorList>
    </citation>
    <scope>NUCLEOTIDE SEQUENCE [LARGE SCALE GENOMIC DNA]</scope>
    <source>
        <strain>JL03</strain>
    </source>
</reference>